<keyword id="KW-0489">Methyltransferase</keyword>
<keyword id="KW-0536">Nodulation</keyword>
<keyword id="KW-1185">Reference proteome</keyword>
<keyword id="KW-0808">Transferase</keyword>
<proteinExistence type="inferred from homology"/>
<organism>
    <name type="scientific">Bradyrhizobium diazoefficiens (strain JCM 10833 / BCRC 13528 / IAM 13628 / NBRC 14792 / USDA 110)</name>
    <dbReference type="NCBI Taxonomy" id="224911"/>
    <lineage>
        <taxon>Bacteria</taxon>
        <taxon>Pseudomonadati</taxon>
        <taxon>Pseudomonadota</taxon>
        <taxon>Alphaproteobacteria</taxon>
        <taxon>Hyphomicrobiales</taxon>
        <taxon>Nitrobacteraceae</taxon>
        <taxon>Bradyrhizobium</taxon>
    </lineage>
</organism>
<reference key="1">
    <citation type="journal article" date="1990" name="Mol. Plant Microbe Interact.">
        <title>Identification of nodS and nodU, two inducible genes inserted between the Bradyrhizobium japonicum nodYABC and nodIJ genes.</title>
        <authorList>
            <person name="Goettfert M."/>
            <person name="Hitz S."/>
            <person name="Hennecke H."/>
        </authorList>
    </citation>
    <scope>NUCLEOTIDE SEQUENCE [GENOMIC DNA]</scope>
    <source>
        <strain>JCM 10833 / BCRC 13528 / IAM 13628 / NBRC 14792 / USDA 110</strain>
    </source>
</reference>
<reference key="2">
    <citation type="journal article" date="2001" name="J. Bacteriol.">
        <title>Potential symbiosis-specific genes uncovered by sequencing a 410-kb DNA region of the Bradyrhizobium japonicum chromosome.</title>
        <authorList>
            <person name="Goettfert M."/>
            <person name="Roethlisberger S."/>
            <person name="Kuendig C."/>
            <person name="Beck C."/>
            <person name="Marty R."/>
            <person name="Hennecke H."/>
        </authorList>
    </citation>
    <scope>NUCLEOTIDE SEQUENCE [GENOMIC DNA]</scope>
    <source>
        <strain>USDA 110spc4</strain>
    </source>
</reference>
<reference key="3">
    <citation type="journal article" date="2002" name="DNA Res.">
        <title>Complete genomic sequence of nitrogen-fixing symbiotic bacterium Bradyrhizobium japonicum USDA110.</title>
        <authorList>
            <person name="Kaneko T."/>
            <person name="Nakamura Y."/>
            <person name="Sato S."/>
            <person name="Minamisawa K."/>
            <person name="Uchiumi T."/>
            <person name="Sasamoto S."/>
            <person name="Watanabe A."/>
            <person name="Idesawa K."/>
            <person name="Iriguchi M."/>
            <person name="Kawashima K."/>
            <person name="Kohara M."/>
            <person name="Matsumoto M."/>
            <person name="Shimpo S."/>
            <person name="Tsuruoka H."/>
            <person name="Wada T."/>
            <person name="Yamada M."/>
            <person name="Tabata S."/>
        </authorList>
    </citation>
    <scope>NUCLEOTIDE SEQUENCE [LARGE SCALE GENOMIC DNA]</scope>
    <source>
        <strain>JCM 10833 / BCRC 13528 / IAM 13628 / NBRC 14792 / USDA 110</strain>
    </source>
</reference>
<protein>
    <recommendedName>
        <fullName>Nodulation protein S</fullName>
        <ecNumber>2.1.1.-</ecNumber>
    </recommendedName>
</protein>
<gene>
    <name type="primary">nodS</name>
    <name type="ordered locus">blr2028</name>
</gene>
<accession>P26026</accession>
<dbReference type="EC" id="2.1.1.-"/>
<dbReference type="EMBL" id="J03685">
    <property type="protein sequence ID" value="AAA26227.1"/>
    <property type="molecule type" value="Genomic_DNA"/>
</dbReference>
<dbReference type="EMBL" id="AH010242">
    <property type="protein sequence ID" value="AAG60999.1"/>
    <property type="molecule type" value="Genomic_DNA"/>
</dbReference>
<dbReference type="EMBL" id="BA000040">
    <property type="protein sequence ID" value="BAC47293.1"/>
    <property type="status" value="ALT_INIT"/>
    <property type="molecule type" value="Genomic_DNA"/>
</dbReference>
<dbReference type="PIR" id="S27494">
    <property type="entry name" value="S27494"/>
</dbReference>
<dbReference type="RefSeq" id="NP_768668.1">
    <property type="nucleotide sequence ID" value="NC_004463.1"/>
</dbReference>
<dbReference type="RefSeq" id="WP_014497813.1">
    <property type="nucleotide sequence ID" value="NZ_CP011360.1"/>
</dbReference>
<dbReference type="SMR" id="P26026"/>
<dbReference type="STRING" id="224911.AAV28_06975"/>
<dbReference type="EnsemblBacteria" id="BAC47293">
    <property type="protein sequence ID" value="BAC47293"/>
    <property type="gene ID" value="BAC47293"/>
</dbReference>
<dbReference type="GeneID" id="92969619"/>
<dbReference type="KEGG" id="bja:blr2028"/>
<dbReference type="eggNOG" id="COG2227">
    <property type="taxonomic scope" value="Bacteria"/>
</dbReference>
<dbReference type="HOGENOM" id="CLU_1359492_0_0_5"/>
<dbReference type="InParanoid" id="P26026"/>
<dbReference type="OrthoDB" id="116799at2"/>
<dbReference type="Proteomes" id="UP000002526">
    <property type="component" value="Chromosome"/>
</dbReference>
<dbReference type="GO" id="GO:0008168">
    <property type="term" value="F:methyltransferase activity"/>
    <property type="evidence" value="ECO:0000318"/>
    <property type="project" value="GO_Central"/>
</dbReference>
<dbReference type="GO" id="GO:0008757">
    <property type="term" value="F:S-adenosylmethionine-dependent methyltransferase activity"/>
    <property type="evidence" value="ECO:0007669"/>
    <property type="project" value="InterPro"/>
</dbReference>
<dbReference type="GO" id="GO:0032259">
    <property type="term" value="P:methylation"/>
    <property type="evidence" value="ECO:0007669"/>
    <property type="project" value="UniProtKB-KW"/>
</dbReference>
<dbReference type="GO" id="GO:0009312">
    <property type="term" value="P:oligosaccharide biosynthetic process"/>
    <property type="evidence" value="ECO:0007669"/>
    <property type="project" value="InterPro"/>
</dbReference>
<dbReference type="CDD" id="cd02440">
    <property type="entry name" value="AdoMet_MTases"/>
    <property type="match status" value="1"/>
</dbReference>
<dbReference type="Gene3D" id="3.40.50.150">
    <property type="entry name" value="Vaccinia Virus protein VP39"/>
    <property type="match status" value="1"/>
</dbReference>
<dbReference type="InterPro" id="IPR020944">
    <property type="entry name" value="NodS"/>
</dbReference>
<dbReference type="InterPro" id="IPR029063">
    <property type="entry name" value="SAM-dependent_MTases_sf"/>
</dbReference>
<dbReference type="InterPro" id="IPR008715">
    <property type="entry name" value="SAM-MeTfrase_NodS-like"/>
</dbReference>
<dbReference type="NCBIfam" id="NF041650">
    <property type="entry name" value="nod_mtase_NodS"/>
    <property type="match status" value="1"/>
</dbReference>
<dbReference type="PANTHER" id="PTHR43861">
    <property type="entry name" value="TRANS-ACONITATE 2-METHYLTRANSFERASE-RELATED"/>
    <property type="match status" value="1"/>
</dbReference>
<dbReference type="Pfam" id="PF05401">
    <property type="entry name" value="NodS"/>
    <property type="match status" value="1"/>
</dbReference>
<dbReference type="PIRSF" id="PIRSF009310">
    <property type="entry name" value="NodS"/>
    <property type="match status" value="1"/>
</dbReference>
<dbReference type="SUPFAM" id="SSF53335">
    <property type="entry name" value="S-adenosyl-L-methionine-dependent methyltransferases"/>
    <property type="match status" value="1"/>
</dbReference>
<feature type="chain" id="PRO_0000096913" description="Nodulation protein S">
    <location>
        <begin position="1"/>
        <end position="209"/>
    </location>
</feature>
<name>NODS_BRADU</name>
<sequence length="209" mass="23406">MTQDENHQLLERELAVDDPWRLDTSAFEQQRYAQMLRMSRRDGDAASALEVGCAAGAFTEMLAPLCERLTVVDVMPQAIERTRLRTGKWSHISWVTCDIQRFSTTEQFDLIVVAEVLYYLRDVVEMHAAIRNLVSMLAPDETLIFGSARDEICQRWGHAAGAETVIALFNESLSEIERRHCCTGSASEDCLIVRFLKPGGASAQSNAGH</sequence>
<evidence type="ECO:0000305" key="1"/>
<comment type="function">
    <text>SAM-utilizing methyltransferase involved in nod factor synthesis.</text>
</comment>
<comment type="similarity">
    <text evidence="1">Belongs to the NodS family.</text>
</comment>
<comment type="sequence caution" evidence="1">
    <conflict type="erroneous initiation">
        <sequence resource="EMBL-CDS" id="BAC47293"/>
    </conflict>
</comment>